<protein>
    <recommendedName>
        <fullName evidence="7">Hepcidin</fullName>
    </recommendedName>
</protein>
<comment type="function">
    <text evidence="3">Seems to act as a signaling molecule involved in the maintenance of iron homeostasis. Seems to be required in conjunction with HFE to regulate both intestinal iron absorption and iron storage in macrophages (By similarity).</text>
</comment>
<comment type="function">
    <text evidence="5 6">Has very strong antibacterial activity against the marine Gram-negative bacteria V.alginolyticus (MIC=24 uM), V.fluvialis, V.harveyis (MIC=12 uM) and V.parahaemolyticus (MIC=6 uM). Has antibacterial activity against the Gram-negative bacteria A.hydrophila (MIC=6 uM), E.coli (MIC=24 uM), and E.coli BL21(DE3)plysS (MIC=6 uM), and the Gram-positive bacteria B.cereus (MIC=24 uM), B.subtilis (MIC=6 uM), C.glutamicum (MIC=3 uM), M.luteus (MIC=3 uM), M.lysodeikticus, S.aureus (MIC=6 uM) and S.epidermis (MIC=12 uM). Possesses antifungal activity against A.niger (MIC=24 uM), F.graminearum (MIC24 uM) and F.solani (MIC=24 uM), but lacks antifungal activity against the yeasts P.pastoris GS115 and C.albicans.</text>
</comment>
<comment type="subunit">
    <text evidence="6">Monomer.</text>
</comment>
<comment type="subcellular location">
    <subcellularLocation>
        <location evidence="3">Secreted</location>
    </subcellularLocation>
</comment>
<comment type="tissue specificity">
    <text evidence="5">Expressed in all tissues tested, with highest levels of expression in kidney and lowest levels in liver. Intra-peritoneal injection of lipopolysaccharide results in increased expression in heart, spleen and stomach, but not in kidney or liver.</text>
</comment>
<comment type="mass spectrometry" mass="2524.2" error="2.0" method="MALDI" evidence="6"/>
<comment type="similarity">
    <text evidence="4">Belongs to the hepcidin family.</text>
</comment>
<sequence length="85" mass="9685">MKTFSVAVAVAVVLAFICLQESSAVPANEEQELEQQIYFADPEMPVESCKMPYYMRENRQGSPARCRFCCRCCPRMRGCGICCRF</sequence>
<accession>A1Z0M0</accession>
<reference key="1">
    <citation type="journal article" date="2009" name="Peptides">
        <title>Cloning and expression of a hepcidin gene from a marine fish (Pseudosciaena crocea) and the antimicrobial activity of its synthetic peptide.</title>
        <authorList>
            <person name="Wang K.-J."/>
            <person name="Cai J.-J."/>
            <person name="Cai L."/>
            <person name="Qu H.-D."/>
            <person name="Yang M."/>
            <person name="Zhang M."/>
        </authorList>
    </citation>
    <scope>NUCLEOTIDE SEQUENCE [GENOMIC DNA / MRNA]</scope>
    <scope>FUNCTION</scope>
    <scope>TISSUE SPECIFICITY</scope>
</reference>
<reference key="2">
    <citation type="journal article" date="2009" name="Fish Shellfish Immunol.">
        <title>Isolation and characterization of a hepcidin peptide from the head kidney of large yellow croaker, Pseudosciaena crocea.</title>
        <authorList>
            <person name="Zhang J."/>
            <person name="Yan Q."/>
            <person name="Ji R."/>
            <person name="Zou W."/>
            <person name="Guo G."/>
        </authorList>
    </citation>
    <scope>PROTEIN SEQUENCE OF 65-85</scope>
    <scope>FUNCTION</scope>
    <scope>SUBUNIT</scope>
    <scope>MASS SPECTROMETRY</scope>
    <source>
        <tissue>Head kidney</tissue>
    </source>
</reference>
<dbReference type="EMBL" id="EF156401">
    <property type="protein sequence ID" value="ABL96317.2"/>
    <property type="molecule type" value="mRNA"/>
</dbReference>
<dbReference type="EMBL" id="EU443735">
    <property type="protein sequence ID" value="ACB98724.1"/>
    <property type="molecule type" value="Genomic_DNA"/>
</dbReference>
<dbReference type="SMR" id="A1Z0M0"/>
<dbReference type="GO" id="GO:0005576">
    <property type="term" value="C:extracellular region"/>
    <property type="evidence" value="ECO:0000314"/>
    <property type="project" value="UniProtKB"/>
</dbReference>
<dbReference type="GO" id="GO:0005179">
    <property type="term" value="F:hormone activity"/>
    <property type="evidence" value="ECO:0007669"/>
    <property type="project" value="UniProtKB-KW"/>
</dbReference>
<dbReference type="GO" id="GO:0050832">
    <property type="term" value="P:defense response to fungus"/>
    <property type="evidence" value="ECO:0000314"/>
    <property type="project" value="UniProtKB"/>
</dbReference>
<dbReference type="GO" id="GO:0050829">
    <property type="term" value="P:defense response to Gram-negative bacterium"/>
    <property type="evidence" value="ECO:0000314"/>
    <property type="project" value="UniProtKB"/>
</dbReference>
<dbReference type="GO" id="GO:0050830">
    <property type="term" value="P:defense response to Gram-positive bacterium"/>
    <property type="evidence" value="ECO:0000314"/>
    <property type="project" value="UniProtKB"/>
</dbReference>
<dbReference type="GO" id="GO:0006879">
    <property type="term" value="P:intracellular iron ion homeostasis"/>
    <property type="evidence" value="ECO:0000314"/>
    <property type="project" value="UniProtKB"/>
</dbReference>
<dbReference type="InterPro" id="IPR010500">
    <property type="entry name" value="Hepcidin"/>
</dbReference>
<dbReference type="PANTHER" id="PTHR16877">
    <property type="entry name" value="HEPCIDIN"/>
    <property type="match status" value="1"/>
</dbReference>
<dbReference type="PANTHER" id="PTHR16877:SF0">
    <property type="entry name" value="HEPCIDIN"/>
    <property type="match status" value="1"/>
</dbReference>
<dbReference type="Pfam" id="PF06446">
    <property type="entry name" value="Hepcidin"/>
    <property type="match status" value="1"/>
</dbReference>
<gene>
    <name evidence="2" type="primary">hamp</name>
</gene>
<keyword id="KW-0044">Antibiotic</keyword>
<keyword id="KW-0929">Antimicrobial</keyword>
<keyword id="KW-0165">Cleavage on pair of basic residues</keyword>
<keyword id="KW-0903">Direct protein sequencing</keyword>
<keyword id="KW-1015">Disulfide bond</keyword>
<keyword id="KW-0372">Hormone</keyword>
<keyword id="KW-0964">Secreted</keyword>
<keyword id="KW-0732">Signal</keyword>
<feature type="signal peptide" evidence="4">
    <location>
        <begin position="1"/>
        <end position="24"/>
    </location>
</feature>
<feature type="propeptide" id="PRO_0000363724" evidence="4">
    <location>
        <begin position="25"/>
        <end position="64"/>
    </location>
</feature>
<feature type="peptide" id="PRO_0000363725" description="Hepcidin">
    <location>
        <begin position="65"/>
        <end position="85"/>
    </location>
</feature>
<feature type="disulfide bond" evidence="1">
    <location>
        <begin position="66"/>
        <end position="83"/>
    </location>
</feature>
<feature type="disulfide bond" evidence="1">
    <location>
        <begin position="69"/>
        <end position="72"/>
    </location>
</feature>
<feature type="disulfide bond" evidence="1">
    <location>
        <begin position="70"/>
        <end position="79"/>
    </location>
</feature>
<feature type="disulfide bond" evidence="1">
    <location>
        <begin position="73"/>
        <end position="82"/>
    </location>
</feature>
<evidence type="ECO:0000250" key="1"/>
<evidence type="ECO:0000250" key="2">
    <source>
        <dbReference type="UniProtKB" id="P81172"/>
    </source>
</evidence>
<evidence type="ECO:0000250" key="3">
    <source>
        <dbReference type="UniProtKB" id="Q9EQ21"/>
    </source>
</evidence>
<evidence type="ECO:0000255" key="4"/>
<evidence type="ECO:0000269" key="5">
    <source>
    </source>
</evidence>
<evidence type="ECO:0000269" key="6">
    <source>
    </source>
</evidence>
<evidence type="ECO:0000312" key="7">
    <source>
        <dbReference type="EMBL" id="ABL96317.2"/>
    </source>
</evidence>
<name>HEPC_LARCR</name>
<organism>
    <name type="scientific">Larimichthys crocea</name>
    <name type="common">Large yellow croaker</name>
    <name type="synonym">Pseudosciaena crocea</name>
    <dbReference type="NCBI Taxonomy" id="215358"/>
    <lineage>
        <taxon>Eukaryota</taxon>
        <taxon>Metazoa</taxon>
        <taxon>Chordata</taxon>
        <taxon>Craniata</taxon>
        <taxon>Vertebrata</taxon>
        <taxon>Euteleostomi</taxon>
        <taxon>Actinopterygii</taxon>
        <taxon>Neopterygii</taxon>
        <taxon>Teleostei</taxon>
        <taxon>Neoteleostei</taxon>
        <taxon>Acanthomorphata</taxon>
        <taxon>Eupercaria</taxon>
        <taxon>Sciaenidae</taxon>
        <taxon>Larimichthys</taxon>
    </lineage>
</organism>
<proteinExistence type="evidence at protein level"/>